<accession>C5A0L7</accession>
<name>YQGE_ECOBW</name>
<gene>
    <name evidence="1" type="primary">yqgE</name>
    <name type="ordered locus">BWG_2670</name>
</gene>
<proteinExistence type="inferred from homology"/>
<organism>
    <name type="scientific">Escherichia coli (strain K12 / MC4100 / BW2952)</name>
    <dbReference type="NCBI Taxonomy" id="595496"/>
    <lineage>
        <taxon>Bacteria</taxon>
        <taxon>Pseudomonadati</taxon>
        <taxon>Pseudomonadota</taxon>
        <taxon>Gammaproteobacteria</taxon>
        <taxon>Enterobacterales</taxon>
        <taxon>Enterobacteriaceae</taxon>
        <taxon>Escherichia</taxon>
    </lineage>
</organism>
<feature type="chain" id="PRO_1000212870" description="UPF0301 protein YqgE">
    <location>
        <begin position="1"/>
        <end position="187"/>
    </location>
</feature>
<dbReference type="EMBL" id="CP001396">
    <property type="protein sequence ID" value="ACR65018.1"/>
    <property type="molecule type" value="Genomic_DNA"/>
</dbReference>
<dbReference type="RefSeq" id="WP_001053178.1">
    <property type="nucleotide sequence ID" value="NC_012759.1"/>
</dbReference>
<dbReference type="SMR" id="C5A0L7"/>
<dbReference type="KEGG" id="ebw:BWG_2670"/>
<dbReference type="HOGENOM" id="CLU_057596_1_0_6"/>
<dbReference type="GO" id="GO:0005829">
    <property type="term" value="C:cytosol"/>
    <property type="evidence" value="ECO:0007669"/>
    <property type="project" value="TreeGrafter"/>
</dbReference>
<dbReference type="FunFam" id="3.30.70.1300:FF:000001">
    <property type="entry name" value="UPF0301 protein YqgE"/>
    <property type="match status" value="1"/>
</dbReference>
<dbReference type="Gene3D" id="3.40.1740.10">
    <property type="entry name" value="VC0467-like"/>
    <property type="match status" value="1"/>
</dbReference>
<dbReference type="Gene3D" id="3.30.70.1300">
    <property type="entry name" value="VC0467-like domains"/>
    <property type="match status" value="1"/>
</dbReference>
<dbReference type="HAMAP" id="MF_00758">
    <property type="entry name" value="UPF0301"/>
    <property type="match status" value="1"/>
</dbReference>
<dbReference type="InterPro" id="IPR003774">
    <property type="entry name" value="AlgH-like"/>
</dbReference>
<dbReference type="NCBIfam" id="NF001266">
    <property type="entry name" value="PRK00228.1-1"/>
    <property type="match status" value="1"/>
</dbReference>
<dbReference type="PANTHER" id="PTHR30327">
    <property type="entry name" value="UNCHARACTERIZED PROTEIN YQGE"/>
    <property type="match status" value="1"/>
</dbReference>
<dbReference type="PANTHER" id="PTHR30327:SF1">
    <property type="entry name" value="UPF0301 PROTEIN YQGE"/>
    <property type="match status" value="1"/>
</dbReference>
<dbReference type="Pfam" id="PF02622">
    <property type="entry name" value="DUF179"/>
    <property type="match status" value="1"/>
</dbReference>
<dbReference type="SUPFAM" id="SSF143456">
    <property type="entry name" value="VC0467-like"/>
    <property type="match status" value="1"/>
</dbReference>
<protein>
    <recommendedName>
        <fullName evidence="1">UPF0301 protein YqgE</fullName>
    </recommendedName>
</protein>
<evidence type="ECO:0000255" key="1">
    <source>
        <dbReference type="HAMAP-Rule" id="MF_00758"/>
    </source>
</evidence>
<sequence length="187" mass="20686">MNLQHHFLIAMPALQDPIFRRSVVYICEHNTNGAMGIIVNKPLENLKIEGILEKLKITPEPRDESIRLDKPVMLGGPLAEDRGFILHTPPSNFASSIRISDNTVMTTSRDVLETLGTDKQPSDVLVALGYASWEKGQLEQEILDNAWLTAPADLNILFKTPIADRWREAAKLIGVDILTMPGVAGHA</sequence>
<reference key="1">
    <citation type="journal article" date="2009" name="J. Bacteriol.">
        <title>Genomic sequencing reveals regulatory mutations and recombinational events in the widely used MC4100 lineage of Escherichia coli K-12.</title>
        <authorList>
            <person name="Ferenci T."/>
            <person name="Zhou Z."/>
            <person name="Betteridge T."/>
            <person name="Ren Y."/>
            <person name="Liu Y."/>
            <person name="Feng L."/>
            <person name="Reeves P.R."/>
            <person name="Wang L."/>
        </authorList>
    </citation>
    <scope>NUCLEOTIDE SEQUENCE [LARGE SCALE GENOMIC DNA]</scope>
    <source>
        <strain>K12 / MC4100 / BW2952</strain>
    </source>
</reference>
<comment type="similarity">
    <text evidence="1">Belongs to the UPF0301 (AlgH) family.</text>
</comment>